<accession>B5FNE9</accession>
<organism>
    <name type="scientific">Salmonella dublin (strain CT_02021853)</name>
    <dbReference type="NCBI Taxonomy" id="439851"/>
    <lineage>
        <taxon>Bacteria</taxon>
        <taxon>Pseudomonadati</taxon>
        <taxon>Pseudomonadota</taxon>
        <taxon>Gammaproteobacteria</taxon>
        <taxon>Enterobacterales</taxon>
        <taxon>Enterobacteriaceae</taxon>
        <taxon>Salmonella</taxon>
    </lineage>
</organism>
<keyword id="KW-0067">ATP-binding</keyword>
<keyword id="KW-0378">Hydrolase</keyword>
<keyword id="KW-0547">Nucleotide-binding</keyword>
<gene>
    <name evidence="1" type="primary">pxpA</name>
    <name type="ordered locus">SeD_A0822</name>
</gene>
<comment type="function">
    <text evidence="1">Catalyzes the cleavage of 5-oxoproline to form L-glutamate coupled to the hydrolysis of ATP to ADP and inorganic phosphate.</text>
</comment>
<comment type="catalytic activity">
    <reaction evidence="1">
        <text>5-oxo-L-proline + ATP + 2 H2O = L-glutamate + ADP + phosphate + H(+)</text>
        <dbReference type="Rhea" id="RHEA:10348"/>
        <dbReference type="ChEBI" id="CHEBI:15377"/>
        <dbReference type="ChEBI" id="CHEBI:15378"/>
        <dbReference type="ChEBI" id="CHEBI:29985"/>
        <dbReference type="ChEBI" id="CHEBI:30616"/>
        <dbReference type="ChEBI" id="CHEBI:43474"/>
        <dbReference type="ChEBI" id="CHEBI:58402"/>
        <dbReference type="ChEBI" id="CHEBI:456216"/>
        <dbReference type="EC" id="3.5.2.9"/>
    </reaction>
</comment>
<comment type="subunit">
    <text evidence="1">Forms a complex composed of PxpA, PxpB and PxpC.</text>
</comment>
<comment type="similarity">
    <text evidence="1">Belongs to the LamB/PxpA family.</text>
</comment>
<proteinExistence type="inferred from homology"/>
<dbReference type="EC" id="3.5.2.9" evidence="1"/>
<dbReference type="EMBL" id="CP001144">
    <property type="protein sequence ID" value="ACH75651.1"/>
    <property type="molecule type" value="Genomic_DNA"/>
</dbReference>
<dbReference type="RefSeq" id="WP_001017925.1">
    <property type="nucleotide sequence ID" value="NC_011205.1"/>
</dbReference>
<dbReference type="SMR" id="B5FNE9"/>
<dbReference type="KEGG" id="sed:SeD_A0822"/>
<dbReference type="HOGENOM" id="CLU_069535_0_0_6"/>
<dbReference type="Proteomes" id="UP000008322">
    <property type="component" value="Chromosome"/>
</dbReference>
<dbReference type="GO" id="GO:0017168">
    <property type="term" value="F:5-oxoprolinase (ATP-hydrolyzing) activity"/>
    <property type="evidence" value="ECO:0007669"/>
    <property type="project" value="UniProtKB-UniRule"/>
</dbReference>
<dbReference type="GO" id="GO:0005524">
    <property type="term" value="F:ATP binding"/>
    <property type="evidence" value="ECO:0007669"/>
    <property type="project" value="UniProtKB-UniRule"/>
</dbReference>
<dbReference type="GO" id="GO:0005975">
    <property type="term" value="P:carbohydrate metabolic process"/>
    <property type="evidence" value="ECO:0007669"/>
    <property type="project" value="InterPro"/>
</dbReference>
<dbReference type="CDD" id="cd10800">
    <property type="entry name" value="LamB_YcsF_YbgL_like"/>
    <property type="match status" value="1"/>
</dbReference>
<dbReference type="Gene3D" id="3.20.20.370">
    <property type="entry name" value="Glycoside hydrolase/deacetylase"/>
    <property type="match status" value="1"/>
</dbReference>
<dbReference type="HAMAP" id="MF_00691">
    <property type="entry name" value="PxpA"/>
    <property type="match status" value="1"/>
</dbReference>
<dbReference type="InterPro" id="IPR011330">
    <property type="entry name" value="Glyco_hydro/deAcase_b/a-brl"/>
</dbReference>
<dbReference type="InterPro" id="IPR005501">
    <property type="entry name" value="LamB/YcsF/PxpA-like"/>
</dbReference>
<dbReference type="NCBIfam" id="NF003812">
    <property type="entry name" value="PRK05406.1-1"/>
    <property type="match status" value="1"/>
</dbReference>
<dbReference type="NCBIfam" id="NF003814">
    <property type="entry name" value="PRK05406.1-3"/>
    <property type="match status" value="1"/>
</dbReference>
<dbReference type="NCBIfam" id="NF003815">
    <property type="entry name" value="PRK05406.1-4"/>
    <property type="match status" value="1"/>
</dbReference>
<dbReference type="NCBIfam" id="NF003816">
    <property type="entry name" value="PRK05406.1-5"/>
    <property type="match status" value="1"/>
</dbReference>
<dbReference type="PANTHER" id="PTHR30292:SF0">
    <property type="entry name" value="5-OXOPROLINASE SUBUNIT A"/>
    <property type="match status" value="1"/>
</dbReference>
<dbReference type="PANTHER" id="PTHR30292">
    <property type="entry name" value="UNCHARACTERIZED PROTEIN YBGL-RELATED"/>
    <property type="match status" value="1"/>
</dbReference>
<dbReference type="Pfam" id="PF03746">
    <property type="entry name" value="LamB_YcsF"/>
    <property type="match status" value="1"/>
</dbReference>
<dbReference type="SUPFAM" id="SSF88713">
    <property type="entry name" value="Glycoside hydrolase/deacetylase"/>
    <property type="match status" value="1"/>
</dbReference>
<feature type="chain" id="PRO_1000132069" description="5-oxoprolinase subunit A">
    <location>
        <begin position="1"/>
        <end position="244"/>
    </location>
</feature>
<sequence length="244" mass="26063">MNIDLNADVGEGCASDSELLTLVSSANIACGFHAGDAQTMLTSVREALKNGVAIGAHPSFPDRDNFGRTAMALPPETVYAQTLYQIGALGAIVQAQGSVMRHVKPHGMLYNQAAKDPHLAQAIAKAVHDYDPSLILVGLAGSELIRAGERHRLVTRQEVFADRGYQADGSLVPRMQPGALIHDEEQALAQTLDMVQAGRVKSVTGVWTTVTAQTVCIHGDGEYALAFARRLRAAFNARNIHVIA</sequence>
<evidence type="ECO:0000255" key="1">
    <source>
        <dbReference type="HAMAP-Rule" id="MF_00691"/>
    </source>
</evidence>
<reference key="1">
    <citation type="journal article" date="2011" name="J. Bacteriol.">
        <title>Comparative genomics of 28 Salmonella enterica isolates: evidence for CRISPR-mediated adaptive sublineage evolution.</title>
        <authorList>
            <person name="Fricke W.F."/>
            <person name="Mammel M.K."/>
            <person name="McDermott P.F."/>
            <person name="Tartera C."/>
            <person name="White D.G."/>
            <person name="Leclerc J.E."/>
            <person name="Ravel J."/>
            <person name="Cebula T.A."/>
        </authorList>
    </citation>
    <scope>NUCLEOTIDE SEQUENCE [LARGE SCALE GENOMIC DNA]</scope>
    <source>
        <strain>CT_02021853</strain>
    </source>
</reference>
<name>PXPA_SALDC</name>
<protein>
    <recommendedName>
        <fullName evidence="1">5-oxoprolinase subunit A</fullName>
        <shortName evidence="1">5-OPase subunit A</shortName>
        <ecNumber evidence="1">3.5.2.9</ecNumber>
    </recommendedName>
    <alternativeName>
        <fullName evidence="1">5-oxoprolinase (ATP-hydrolyzing) subunit A</fullName>
    </alternativeName>
</protein>